<accession>Q6F6L1</accession>
<reference key="1">
    <citation type="journal article" date="2004" name="Nucleic Acids Res.">
        <title>Unique features revealed by the genome sequence of Acinetobacter sp. ADP1, a versatile and naturally transformation competent bacterium.</title>
        <authorList>
            <person name="Barbe V."/>
            <person name="Vallenet D."/>
            <person name="Fonknechten N."/>
            <person name="Kreimeyer A."/>
            <person name="Oztas S."/>
            <person name="Labarre L."/>
            <person name="Cruveiller S."/>
            <person name="Robert C."/>
            <person name="Duprat S."/>
            <person name="Wincker P."/>
            <person name="Ornston L.N."/>
            <person name="Weissenbach J."/>
            <person name="Marliere P."/>
            <person name="Cohen G.N."/>
            <person name="Medigue C."/>
        </authorList>
    </citation>
    <scope>NUCLEOTIDE SEQUENCE [LARGE SCALE GENOMIC DNA]</scope>
    <source>
        <strain>ATCC 33305 / BD413 / ADP1</strain>
    </source>
</reference>
<comment type="function">
    <text evidence="1">Exhibits a very high intrinsic GTPase hydrolysis rate. Involved in the addition of a carboxymethylaminomethyl (cmnm) group at the wobble position (U34) of certain tRNAs, forming tRNA-cmnm(5)s(2)U34.</text>
</comment>
<comment type="cofactor">
    <cofactor evidence="1">
        <name>K(+)</name>
        <dbReference type="ChEBI" id="CHEBI:29103"/>
    </cofactor>
    <text evidence="1">Binds 1 potassium ion per subunit.</text>
</comment>
<comment type="subunit">
    <text evidence="1">Homodimer. Heterotetramer of two MnmE and two MnmG subunits.</text>
</comment>
<comment type="subcellular location">
    <subcellularLocation>
        <location evidence="1">Cytoplasm</location>
    </subcellularLocation>
</comment>
<comment type="similarity">
    <text evidence="1">Belongs to the TRAFAC class TrmE-Era-EngA-EngB-Septin-like GTPase superfamily. TrmE GTPase family.</text>
</comment>
<name>MNME_ACIAD</name>
<sequence length="462" mass="50323">MICIFLFLGFYMQYQTTIAAIATPPGRGGVGVIRLSGPKASLIAEHLTAKTLPAARMAGFRQFYDAEGLVMDEGLVLYFPNPNSFTGEDVVELQGHGGPVIQNALLERLFELGAKAAKAGEFSMRAFENGKLDLVQAEAIADLIDATSQAAARSAVRSLQGAFSLRINQVLEKLIHLRLHVEAAIDFPEEEIDFLADGKILALLDDVRDSVQQVQTSARQGQLLREGLQVVIAGKPNAGKSSLLNALAGNERAIVTDIAGTTRDVLHERISLNGLPITLTDTAGLRETGDIVEKEGIRRAIKEIEQADLLLLVYDLSEGADPLALAQEYFAEHLEPRRLILIGNKCDLMTGHPELAQYQNFRHVTVSAKMDMGVQALIDAITAHAGFQPEEDTFIARTRHLDAMKRTQLHLHEAREQLVVFHAGELVAESLRLAQNALSEITGEFSADDLLGKIFGSFCIGK</sequence>
<proteinExistence type="inferred from homology"/>
<dbReference type="EC" id="3.6.-.-" evidence="1"/>
<dbReference type="EMBL" id="CR543861">
    <property type="protein sequence ID" value="CAG70306.1"/>
    <property type="molecule type" value="Genomic_DNA"/>
</dbReference>
<dbReference type="SMR" id="Q6F6L1"/>
<dbReference type="STRING" id="202950.GCA_001485005_03181"/>
<dbReference type="KEGG" id="aci:ACIAD3680"/>
<dbReference type="eggNOG" id="COG0486">
    <property type="taxonomic scope" value="Bacteria"/>
</dbReference>
<dbReference type="HOGENOM" id="CLU_019624_4_1_6"/>
<dbReference type="Proteomes" id="UP000000430">
    <property type="component" value="Chromosome"/>
</dbReference>
<dbReference type="GO" id="GO:0005829">
    <property type="term" value="C:cytosol"/>
    <property type="evidence" value="ECO:0007669"/>
    <property type="project" value="TreeGrafter"/>
</dbReference>
<dbReference type="GO" id="GO:0005525">
    <property type="term" value="F:GTP binding"/>
    <property type="evidence" value="ECO:0007669"/>
    <property type="project" value="UniProtKB-UniRule"/>
</dbReference>
<dbReference type="GO" id="GO:0003924">
    <property type="term" value="F:GTPase activity"/>
    <property type="evidence" value="ECO:0007669"/>
    <property type="project" value="UniProtKB-UniRule"/>
</dbReference>
<dbReference type="GO" id="GO:0046872">
    <property type="term" value="F:metal ion binding"/>
    <property type="evidence" value="ECO:0007669"/>
    <property type="project" value="UniProtKB-KW"/>
</dbReference>
<dbReference type="GO" id="GO:0030488">
    <property type="term" value="P:tRNA methylation"/>
    <property type="evidence" value="ECO:0007669"/>
    <property type="project" value="TreeGrafter"/>
</dbReference>
<dbReference type="GO" id="GO:0002098">
    <property type="term" value="P:tRNA wobble uridine modification"/>
    <property type="evidence" value="ECO:0007669"/>
    <property type="project" value="TreeGrafter"/>
</dbReference>
<dbReference type="CDD" id="cd04164">
    <property type="entry name" value="trmE"/>
    <property type="match status" value="1"/>
</dbReference>
<dbReference type="CDD" id="cd14858">
    <property type="entry name" value="TrmE_N"/>
    <property type="match status" value="1"/>
</dbReference>
<dbReference type="FunFam" id="3.40.50.300:FF:001376">
    <property type="entry name" value="tRNA modification GTPase MnmE"/>
    <property type="match status" value="1"/>
</dbReference>
<dbReference type="Gene3D" id="3.40.50.300">
    <property type="entry name" value="P-loop containing nucleotide triphosphate hydrolases"/>
    <property type="match status" value="1"/>
</dbReference>
<dbReference type="Gene3D" id="3.30.1360.120">
    <property type="entry name" value="Probable tRNA modification gtpase trme, domain 1"/>
    <property type="match status" value="1"/>
</dbReference>
<dbReference type="Gene3D" id="1.20.120.430">
    <property type="entry name" value="tRNA modification GTPase MnmE domain 2"/>
    <property type="match status" value="1"/>
</dbReference>
<dbReference type="HAMAP" id="MF_00379">
    <property type="entry name" value="GTPase_MnmE"/>
    <property type="match status" value="1"/>
</dbReference>
<dbReference type="InterPro" id="IPR031168">
    <property type="entry name" value="G_TrmE"/>
</dbReference>
<dbReference type="InterPro" id="IPR006073">
    <property type="entry name" value="GTP-bd"/>
</dbReference>
<dbReference type="InterPro" id="IPR018948">
    <property type="entry name" value="GTP-bd_TrmE_N"/>
</dbReference>
<dbReference type="InterPro" id="IPR004520">
    <property type="entry name" value="GTPase_MnmE"/>
</dbReference>
<dbReference type="InterPro" id="IPR027368">
    <property type="entry name" value="MnmE_dom2"/>
</dbReference>
<dbReference type="InterPro" id="IPR025867">
    <property type="entry name" value="MnmE_helical"/>
</dbReference>
<dbReference type="InterPro" id="IPR027417">
    <property type="entry name" value="P-loop_NTPase"/>
</dbReference>
<dbReference type="InterPro" id="IPR005225">
    <property type="entry name" value="Small_GTP-bd"/>
</dbReference>
<dbReference type="InterPro" id="IPR027266">
    <property type="entry name" value="TrmE/GcvT_dom1"/>
</dbReference>
<dbReference type="NCBIfam" id="TIGR00450">
    <property type="entry name" value="mnmE_trmE_thdF"/>
    <property type="match status" value="1"/>
</dbReference>
<dbReference type="NCBIfam" id="NF003661">
    <property type="entry name" value="PRK05291.1-3"/>
    <property type="match status" value="1"/>
</dbReference>
<dbReference type="NCBIfam" id="TIGR00231">
    <property type="entry name" value="small_GTP"/>
    <property type="match status" value="1"/>
</dbReference>
<dbReference type="PANTHER" id="PTHR42714">
    <property type="entry name" value="TRNA MODIFICATION GTPASE GTPBP3"/>
    <property type="match status" value="1"/>
</dbReference>
<dbReference type="PANTHER" id="PTHR42714:SF2">
    <property type="entry name" value="TRNA MODIFICATION GTPASE GTPBP3, MITOCHONDRIAL"/>
    <property type="match status" value="1"/>
</dbReference>
<dbReference type="Pfam" id="PF01926">
    <property type="entry name" value="MMR_HSR1"/>
    <property type="match status" value="1"/>
</dbReference>
<dbReference type="Pfam" id="PF12631">
    <property type="entry name" value="MnmE_helical"/>
    <property type="match status" value="1"/>
</dbReference>
<dbReference type="Pfam" id="PF10396">
    <property type="entry name" value="TrmE_N"/>
    <property type="match status" value="1"/>
</dbReference>
<dbReference type="PRINTS" id="PR00326">
    <property type="entry name" value="GTP1OBG"/>
</dbReference>
<dbReference type="SUPFAM" id="SSF52540">
    <property type="entry name" value="P-loop containing nucleoside triphosphate hydrolases"/>
    <property type="match status" value="1"/>
</dbReference>
<dbReference type="SUPFAM" id="SSF116878">
    <property type="entry name" value="TrmE connector domain"/>
    <property type="match status" value="1"/>
</dbReference>
<dbReference type="PROSITE" id="PS51709">
    <property type="entry name" value="G_TRME"/>
    <property type="match status" value="1"/>
</dbReference>
<organism>
    <name type="scientific">Acinetobacter baylyi (strain ATCC 33305 / BD413 / ADP1)</name>
    <dbReference type="NCBI Taxonomy" id="62977"/>
    <lineage>
        <taxon>Bacteria</taxon>
        <taxon>Pseudomonadati</taxon>
        <taxon>Pseudomonadota</taxon>
        <taxon>Gammaproteobacteria</taxon>
        <taxon>Moraxellales</taxon>
        <taxon>Moraxellaceae</taxon>
        <taxon>Acinetobacter</taxon>
    </lineage>
</organism>
<protein>
    <recommendedName>
        <fullName evidence="1">tRNA modification GTPase MnmE</fullName>
        <ecNumber evidence="1">3.6.-.-</ecNumber>
    </recommendedName>
</protein>
<evidence type="ECO:0000255" key="1">
    <source>
        <dbReference type="HAMAP-Rule" id="MF_00379"/>
    </source>
</evidence>
<feature type="chain" id="PRO_0000345699" description="tRNA modification GTPase MnmE">
    <location>
        <begin position="1"/>
        <end position="462"/>
    </location>
</feature>
<feature type="domain" description="TrmE-type G">
    <location>
        <begin position="227"/>
        <end position="386"/>
    </location>
</feature>
<feature type="binding site" evidence="1">
    <location>
        <position position="34"/>
    </location>
    <ligand>
        <name>(6S)-5-formyl-5,6,7,8-tetrahydrofolate</name>
        <dbReference type="ChEBI" id="CHEBI:57457"/>
    </ligand>
</feature>
<feature type="binding site" evidence="1">
    <location>
        <position position="92"/>
    </location>
    <ligand>
        <name>(6S)-5-formyl-5,6,7,8-tetrahydrofolate</name>
        <dbReference type="ChEBI" id="CHEBI:57457"/>
    </ligand>
</feature>
<feature type="binding site" evidence="1">
    <location>
        <position position="131"/>
    </location>
    <ligand>
        <name>(6S)-5-formyl-5,6,7,8-tetrahydrofolate</name>
        <dbReference type="ChEBI" id="CHEBI:57457"/>
    </ligand>
</feature>
<feature type="binding site" evidence="1">
    <location>
        <begin position="237"/>
        <end position="242"/>
    </location>
    <ligand>
        <name>GTP</name>
        <dbReference type="ChEBI" id="CHEBI:37565"/>
    </ligand>
</feature>
<feature type="binding site" evidence="1">
    <location>
        <position position="237"/>
    </location>
    <ligand>
        <name>K(+)</name>
        <dbReference type="ChEBI" id="CHEBI:29103"/>
    </ligand>
</feature>
<feature type="binding site" evidence="1">
    <location>
        <position position="241"/>
    </location>
    <ligand>
        <name>Mg(2+)</name>
        <dbReference type="ChEBI" id="CHEBI:18420"/>
    </ligand>
</feature>
<feature type="binding site" evidence="1">
    <location>
        <begin position="256"/>
        <end position="262"/>
    </location>
    <ligand>
        <name>GTP</name>
        <dbReference type="ChEBI" id="CHEBI:37565"/>
    </ligand>
</feature>
<feature type="binding site" evidence="1">
    <location>
        <position position="256"/>
    </location>
    <ligand>
        <name>K(+)</name>
        <dbReference type="ChEBI" id="CHEBI:29103"/>
    </ligand>
</feature>
<feature type="binding site" evidence="1">
    <location>
        <position position="258"/>
    </location>
    <ligand>
        <name>K(+)</name>
        <dbReference type="ChEBI" id="CHEBI:29103"/>
    </ligand>
</feature>
<feature type="binding site" evidence="1">
    <location>
        <position position="261"/>
    </location>
    <ligand>
        <name>K(+)</name>
        <dbReference type="ChEBI" id="CHEBI:29103"/>
    </ligand>
</feature>
<feature type="binding site" evidence="1">
    <location>
        <position position="262"/>
    </location>
    <ligand>
        <name>Mg(2+)</name>
        <dbReference type="ChEBI" id="CHEBI:18420"/>
    </ligand>
</feature>
<feature type="binding site" evidence="1">
    <location>
        <begin position="281"/>
        <end position="284"/>
    </location>
    <ligand>
        <name>GTP</name>
        <dbReference type="ChEBI" id="CHEBI:37565"/>
    </ligand>
</feature>
<feature type="binding site" evidence="1">
    <location>
        <position position="462"/>
    </location>
    <ligand>
        <name>(6S)-5-formyl-5,6,7,8-tetrahydrofolate</name>
        <dbReference type="ChEBI" id="CHEBI:57457"/>
    </ligand>
</feature>
<gene>
    <name evidence="1" type="primary">mnmE</name>
    <name evidence="1" type="synonym">trmE</name>
    <name type="ordered locus">ACIAD3680</name>
</gene>
<keyword id="KW-0963">Cytoplasm</keyword>
<keyword id="KW-0342">GTP-binding</keyword>
<keyword id="KW-0378">Hydrolase</keyword>
<keyword id="KW-0460">Magnesium</keyword>
<keyword id="KW-0479">Metal-binding</keyword>
<keyword id="KW-0547">Nucleotide-binding</keyword>
<keyword id="KW-0630">Potassium</keyword>
<keyword id="KW-0819">tRNA processing</keyword>